<reference key="1">
    <citation type="journal article" date="2003" name="Nat. Biotechnol.">
        <title>The genome sequence of the entomopathogenic bacterium Photorhabdus luminescens.</title>
        <authorList>
            <person name="Duchaud E."/>
            <person name="Rusniok C."/>
            <person name="Frangeul L."/>
            <person name="Buchrieser C."/>
            <person name="Givaudan A."/>
            <person name="Taourit S."/>
            <person name="Bocs S."/>
            <person name="Boursaux-Eude C."/>
            <person name="Chandler M."/>
            <person name="Charles J.-F."/>
            <person name="Dassa E."/>
            <person name="Derose R."/>
            <person name="Derzelle S."/>
            <person name="Freyssinet G."/>
            <person name="Gaudriault S."/>
            <person name="Medigue C."/>
            <person name="Lanois A."/>
            <person name="Powell K."/>
            <person name="Siguier P."/>
            <person name="Vincent R."/>
            <person name="Wingate V."/>
            <person name="Zouine M."/>
            <person name="Glaser P."/>
            <person name="Boemare N."/>
            <person name="Danchin A."/>
            <person name="Kunst F."/>
        </authorList>
    </citation>
    <scope>NUCLEOTIDE SEQUENCE [LARGE SCALE GENOMIC DNA]</scope>
    <source>
        <strain>DSM 15139 / CIP 105565 / TT01</strain>
    </source>
</reference>
<evidence type="ECO:0000255" key="1">
    <source>
        <dbReference type="HAMAP-Rule" id="MF_00233"/>
    </source>
</evidence>
<accession>Q7N588</accession>
<sequence>MKPIQKLSLFRLLPLSCVLLLTACTLTQPGGTGSADSPQWRAHTQQLQQLNQYQTRGSFAYLSNEKKVYARFFWQQYHPERYRLLLTNPLGSTELELIVQPNMTQLTDSQGKKYFSDNPEEIIYQFTNMDIPLDNLRHWITGLPGDAKNFKLDANYLLKTVNYQQNGATWQVNYQSYDTSTTPALPNRLELIQGDRRIKLKMDNWTTK</sequence>
<organism>
    <name type="scientific">Photorhabdus laumondii subsp. laumondii (strain DSM 15139 / CIP 105565 / TT01)</name>
    <name type="common">Photorhabdus luminescens subsp. laumondii</name>
    <dbReference type="NCBI Taxonomy" id="243265"/>
    <lineage>
        <taxon>Bacteria</taxon>
        <taxon>Pseudomonadati</taxon>
        <taxon>Pseudomonadota</taxon>
        <taxon>Gammaproteobacteria</taxon>
        <taxon>Enterobacterales</taxon>
        <taxon>Morganellaceae</taxon>
        <taxon>Photorhabdus</taxon>
    </lineage>
</organism>
<protein>
    <recommendedName>
        <fullName evidence="1">Outer-membrane lipoprotein LolB</fullName>
    </recommendedName>
</protein>
<gene>
    <name evidence="1" type="primary">lolB</name>
    <name type="ordered locus">plu2068</name>
</gene>
<dbReference type="EMBL" id="BX571866">
    <property type="protein sequence ID" value="CAE14361.1"/>
    <property type="molecule type" value="Genomic_DNA"/>
</dbReference>
<dbReference type="RefSeq" id="WP_011146323.1">
    <property type="nucleotide sequence ID" value="NC_005126.1"/>
</dbReference>
<dbReference type="SMR" id="Q7N588"/>
<dbReference type="STRING" id="243265.plu2068"/>
<dbReference type="GeneID" id="48848344"/>
<dbReference type="KEGG" id="plu:plu2068"/>
<dbReference type="eggNOG" id="COG3017">
    <property type="taxonomic scope" value="Bacteria"/>
</dbReference>
<dbReference type="HOGENOM" id="CLU_092816_1_1_6"/>
<dbReference type="OrthoDB" id="9797618at2"/>
<dbReference type="Proteomes" id="UP000002514">
    <property type="component" value="Chromosome"/>
</dbReference>
<dbReference type="GO" id="GO:0009279">
    <property type="term" value="C:cell outer membrane"/>
    <property type="evidence" value="ECO:0007669"/>
    <property type="project" value="UniProtKB-SubCell"/>
</dbReference>
<dbReference type="GO" id="GO:0044874">
    <property type="term" value="P:lipoprotein localization to outer membrane"/>
    <property type="evidence" value="ECO:0007669"/>
    <property type="project" value="UniProtKB-UniRule"/>
</dbReference>
<dbReference type="GO" id="GO:0015031">
    <property type="term" value="P:protein transport"/>
    <property type="evidence" value="ECO:0007669"/>
    <property type="project" value="UniProtKB-KW"/>
</dbReference>
<dbReference type="CDD" id="cd16326">
    <property type="entry name" value="LolB"/>
    <property type="match status" value="1"/>
</dbReference>
<dbReference type="Gene3D" id="2.50.20.10">
    <property type="entry name" value="Lipoprotein localisation LolA/LolB/LppX"/>
    <property type="match status" value="1"/>
</dbReference>
<dbReference type="HAMAP" id="MF_00233">
    <property type="entry name" value="LolB"/>
    <property type="match status" value="1"/>
</dbReference>
<dbReference type="InterPro" id="IPR029046">
    <property type="entry name" value="LolA/LolB/LppX"/>
</dbReference>
<dbReference type="InterPro" id="IPR004565">
    <property type="entry name" value="OM_lipoprot_LolB"/>
</dbReference>
<dbReference type="NCBIfam" id="TIGR00548">
    <property type="entry name" value="lolB"/>
    <property type="match status" value="1"/>
</dbReference>
<dbReference type="Pfam" id="PF03550">
    <property type="entry name" value="LolB"/>
    <property type="match status" value="1"/>
</dbReference>
<dbReference type="SUPFAM" id="SSF89392">
    <property type="entry name" value="Prokaryotic lipoproteins and lipoprotein localization factors"/>
    <property type="match status" value="1"/>
</dbReference>
<dbReference type="PROSITE" id="PS51257">
    <property type="entry name" value="PROKAR_LIPOPROTEIN"/>
    <property type="match status" value="1"/>
</dbReference>
<name>LOLB_PHOLL</name>
<feature type="signal peptide" evidence="1">
    <location>
        <begin position="1"/>
        <end position="23"/>
    </location>
</feature>
<feature type="chain" id="PRO_0000018305" description="Outer-membrane lipoprotein LolB">
    <location>
        <begin position="24"/>
        <end position="208"/>
    </location>
</feature>
<feature type="lipid moiety-binding region" description="N-palmitoyl cysteine" evidence="1">
    <location>
        <position position="24"/>
    </location>
</feature>
<feature type="lipid moiety-binding region" description="S-diacylglycerol cysteine" evidence="1">
    <location>
        <position position="24"/>
    </location>
</feature>
<comment type="function">
    <text evidence="1">Plays a critical role in the incorporation of lipoproteins in the outer membrane after they are released by the LolA protein.</text>
</comment>
<comment type="subunit">
    <text evidence="1">Monomer.</text>
</comment>
<comment type="subcellular location">
    <subcellularLocation>
        <location evidence="1">Cell outer membrane</location>
        <topology evidence="1">Lipid-anchor</topology>
    </subcellularLocation>
</comment>
<comment type="similarity">
    <text evidence="1">Belongs to the LolB family.</text>
</comment>
<proteinExistence type="inferred from homology"/>
<keyword id="KW-0998">Cell outer membrane</keyword>
<keyword id="KW-0143">Chaperone</keyword>
<keyword id="KW-0449">Lipoprotein</keyword>
<keyword id="KW-0472">Membrane</keyword>
<keyword id="KW-0564">Palmitate</keyword>
<keyword id="KW-0653">Protein transport</keyword>
<keyword id="KW-1185">Reference proteome</keyword>
<keyword id="KW-0732">Signal</keyword>
<keyword id="KW-0813">Transport</keyword>